<reference key="1">
    <citation type="journal article" date="1996" name="Biochem. Pharmacol.">
        <title>Heterologous expression of the cloned guinea pig alpha 2A, alpha 2B, and alpha 2C adrenoceptor subtypes. Radioligand binding and functional coupling to a cAMP-responsive reporter gene.</title>
        <authorList>
            <person name="Svensson S.P."/>
            <person name="Bailey T.J."/>
            <person name="Porter A.C."/>
            <person name="Richman J.G."/>
            <person name="Regan J.W."/>
        </authorList>
    </citation>
    <scope>NUCLEOTIDE SEQUENCE [GENOMIC DNA]</scope>
    <source>
        <strain>Hartley</strain>
    </source>
</reference>
<protein>
    <recommendedName>
        <fullName evidence="2">Alpha-2A adrenergic receptor</fullName>
    </recommendedName>
    <alternativeName>
        <fullName>Alpha-2A adrenoreceptor</fullName>
        <shortName>Alpha-2A adrenoceptor</shortName>
        <shortName>Alpha-2AAR</shortName>
    </alternativeName>
</protein>
<proteinExistence type="inferred from homology"/>
<comment type="function">
    <text evidence="1">Alpha-2 adrenergic receptors mediate the catecholamine-induced inhibition of adenylate cyclase through the action of G proteins. Component of the ATAC complex, a complex with histone acetyltransferase activity on histones H3 and H4 (By similarity).</text>
</comment>
<comment type="subunit">
    <text evidence="1">Component of the ADA2A-containing complex (ATAC), composed of KAT14, KAT2A, TADA2L, TADA3L, ZZ3, MBIP, WDR5, YEATS2, CCDC101 and DR1.</text>
</comment>
<comment type="subcellular location">
    <subcellularLocation>
        <location>Cell membrane</location>
        <topology>Multi-pass membrane protein</topology>
    </subcellularLocation>
</comment>
<comment type="similarity">
    <text evidence="6">Belongs to the G-protein coupled receptor 1 family. Adrenergic receptor subfamily. ADRA2A sub-subfamily.</text>
</comment>
<comment type="caution">
    <text evidence="8">It is uncertain whether Met-1 or Met-15 is the initiator.</text>
</comment>
<comment type="sequence caution" evidence="8">
    <conflict type="erroneous initiation">
        <sequence resource="EMBL-CDS" id="AAA67074"/>
    </conflict>
    <text>Truncated N-terminus.</text>
</comment>
<organism>
    <name type="scientific">Cavia porcellus</name>
    <name type="common">Guinea pig</name>
    <dbReference type="NCBI Taxonomy" id="10141"/>
    <lineage>
        <taxon>Eukaryota</taxon>
        <taxon>Metazoa</taxon>
        <taxon>Chordata</taxon>
        <taxon>Craniata</taxon>
        <taxon>Vertebrata</taxon>
        <taxon>Euteleostomi</taxon>
        <taxon>Mammalia</taxon>
        <taxon>Eutheria</taxon>
        <taxon>Euarchontoglires</taxon>
        <taxon>Glires</taxon>
        <taxon>Rodentia</taxon>
        <taxon>Hystricomorpha</taxon>
        <taxon>Caviidae</taxon>
        <taxon>Cavia</taxon>
    </lineage>
</organism>
<gene>
    <name evidence="2" type="primary">ADRA2A</name>
</gene>
<keyword id="KW-1003">Cell membrane</keyword>
<keyword id="KW-1015">Disulfide bond</keyword>
<keyword id="KW-0297">G-protein coupled receptor</keyword>
<keyword id="KW-0325">Glycoprotein</keyword>
<keyword id="KW-0449">Lipoprotein</keyword>
<keyword id="KW-0472">Membrane</keyword>
<keyword id="KW-0488">Methylation</keyword>
<keyword id="KW-0564">Palmitate</keyword>
<keyword id="KW-0597">Phosphoprotein</keyword>
<keyword id="KW-0675">Receptor</keyword>
<keyword id="KW-1185">Reference proteome</keyword>
<keyword id="KW-0807">Transducer</keyword>
<keyword id="KW-0812">Transmembrane</keyword>
<keyword id="KW-1133">Transmembrane helix</keyword>
<name>ADA2A_CAVPO</name>
<evidence type="ECO:0000250" key="1"/>
<evidence type="ECO:0000250" key="2">
    <source>
        <dbReference type="UniProtKB" id="P08913"/>
    </source>
</evidence>
<evidence type="ECO:0000250" key="3">
    <source>
        <dbReference type="UniProtKB" id="P22909"/>
    </source>
</evidence>
<evidence type="ECO:0000250" key="4">
    <source>
        <dbReference type="UniProtKB" id="Q01338"/>
    </source>
</evidence>
<evidence type="ECO:0000255" key="5"/>
<evidence type="ECO:0000255" key="6">
    <source>
        <dbReference type="PROSITE-ProRule" id="PRU00521"/>
    </source>
</evidence>
<evidence type="ECO:0000256" key="7">
    <source>
        <dbReference type="SAM" id="MobiDB-lite"/>
    </source>
</evidence>
<evidence type="ECO:0000305" key="8"/>
<sequence length="464" mass="50851">MFRQEQRWPRQLWPMGSLQPDSGNASWNGTEGPGGGTRATPYSLQVTVTLVCLVGLLILLTVFGNVLVIIAVFTSRALKAPQNLFLVSLASADILVATLVIPFSLANEVMGYWYFGKAWCEIYLALDVLFCTSSIVHLCAISLDRYWSITQAIEYNLKRTPRRIKAIIVTVWVISAVISFPPLISFEKAGGGGQQPAEPRCEINDQKWYVISSSIGSFFAPCLIMILVYVRIYQIAKRRTRVPPSRRGPDAHAAAPPGGAERRPNGLGLERGVGPGGAEAEPLPTQVNGAPGEPAPAGPRDAEALDLEESSSSEHAERPPGARRPERGLRAKSKARASQVKPGDSLPRRAPGAAGSGTSGSGPGEERGGGAKASRWRGRQNREKRFTFVLAVVIGVFVVCWFPFFFTYTLTAVGCSVPRTLFKFFFWFGYCNSSLNPVIYTIFNHDFRRAFKKILCRGDRKRIV</sequence>
<dbReference type="EMBL" id="U25722">
    <property type="protein sequence ID" value="AAA67074.1"/>
    <property type="status" value="ALT_INIT"/>
    <property type="molecule type" value="Genomic_DNA"/>
</dbReference>
<dbReference type="RefSeq" id="NP_001166317.1">
    <property type="nucleotide sequence ID" value="NM_001172846.1"/>
</dbReference>
<dbReference type="SMR" id="Q60474"/>
<dbReference type="FunCoup" id="Q60474">
    <property type="interactions" value="691"/>
</dbReference>
<dbReference type="STRING" id="10141.ENSCPOP00000018153"/>
<dbReference type="BindingDB" id="Q60474"/>
<dbReference type="GlyCosmos" id="Q60474">
    <property type="glycosylation" value="2 sites, No reported glycans"/>
</dbReference>
<dbReference type="GeneID" id="100135475"/>
<dbReference type="KEGG" id="cpoc:100135475"/>
<dbReference type="CTD" id="150"/>
<dbReference type="eggNOG" id="KOG3656">
    <property type="taxonomic scope" value="Eukaryota"/>
</dbReference>
<dbReference type="InParanoid" id="Q60474"/>
<dbReference type="OrthoDB" id="5975661at2759"/>
<dbReference type="Proteomes" id="UP000005447">
    <property type="component" value="Unassembled WGS sequence"/>
</dbReference>
<dbReference type="GO" id="GO:0005886">
    <property type="term" value="C:plasma membrane"/>
    <property type="evidence" value="ECO:0007669"/>
    <property type="project" value="UniProtKB-SubCell"/>
</dbReference>
<dbReference type="GO" id="GO:0004938">
    <property type="term" value="F:alpha2-adrenergic receptor activity"/>
    <property type="evidence" value="ECO:0007669"/>
    <property type="project" value="InterPro"/>
</dbReference>
<dbReference type="GO" id="GO:0051379">
    <property type="term" value="F:epinephrine binding"/>
    <property type="evidence" value="ECO:0007669"/>
    <property type="project" value="TreeGrafter"/>
</dbReference>
<dbReference type="GO" id="GO:0030168">
    <property type="term" value="P:platelet activation"/>
    <property type="evidence" value="ECO:0007669"/>
    <property type="project" value="InterPro"/>
</dbReference>
<dbReference type="GO" id="GO:0006940">
    <property type="term" value="P:regulation of smooth muscle contraction"/>
    <property type="evidence" value="ECO:0007669"/>
    <property type="project" value="InterPro"/>
</dbReference>
<dbReference type="GO" id="GO:0019229">
    <property type="term" value="P:regulation of vasoconstriction"/>
    <property type="evidence" value="ECO:0007669"/>
    <property type="project" value="InterPro"/>
</dbReference>
<dbReference type="CDD" id="cd15322">
    <property type="entry name" value="7tmA_alpha2A_AR"/>
    <property type="match status" value="1"/>
</dbReference>
<dbReference type="Gene3D" id="1.20.1070.10">
    <property type="entry name" value="Rhodopsin 7-helix transmembrane proteins"/>
    <property type="match status" value="1"/>
</dbReference>
<dbReference type="InterPro" id="IPR002233">
    <property type="entry name" value="ADR_fam"/>
</dbReference>
<dbReference type="InterPro" id="IPR001946">
    <property type="entry name" value="ADRA2A_rcpt"/>
</dbReference>
<dbReference type="InterPro" id="IPR000276">
    <property type="entry name" value="GPCR_Rhodpsn"/>
</dbReference>
<dbReference type="InterPro" id="IPR017452">
    <property type="entry name" value="GPCR_Rhodpsn_7TM"/>
</dbReference>
<dbReference type="PANTHER" id="PTHR24248">
    <property type="entry name" value="ADRENERGIC RECEPTOR-RELATED G-PROTEIN COUPLED RECEPTOR"/>
    <property type="match status" value="1"/>
</dbReference>
<dbReference type="PANTHER" id="PTHR24248:SF24">
    <property type="entry name" value="ALPHA-2A ADRENERGIC RECEPTOR"/>
    <property type="match status" value="1"/>
</dbReference>
<dbReference type="Pfam" id="PF00001">
    <property type="entry name" value="7tm_1"/>
    <property type="match status" value="1"/>
</dbReference>
<dbReference type="PRINTS" id="PR01103">
    <property type="entry name" value="ADRENERGICR"/>
</dbReference>
<dbReference type="PRINTS" id="PR00558">
    <property type="entry name" value="ADRENRGCA2AR"/>
</dbReference>
<dbReference type="PRINTS" id="PR00237">
    <property type="entry name" value="GPCRRHODOPSN"/>
</dbReference>
<dbReference type="SMART" id="SM01381">
    <property type="entry name" value="7TM_GPCR_Srsx"/>
    <property type="match status" value="1"/>
</dbReference>
<dbReference type="SUPFAM" id="SSF81321">
    <property type="entry name" value="Family A G protein-coupled receptor-like"/>
    <property type="match status" value="1"/>
</dbReference>
<dbReference type="PROSITE" id="PS00237">
    <property type="entry name" value="G_PROTEIN_RECEP_F1_1"/>
    <property type="match status" value="1"/>
</dbReference>
<dbReference type="PROSITE" id="PS50262">
    <property type="entry name" value="G_PROTEIN_RECEP_F1_2"/>
    <property type="match status" value="1"/>
</dbReference>
<feature type="chain" id="PRO_0000069079" description="Alpha-2A adrenergic receptor">
    <location>
        <begin position="1"/>
        <end position="464"/>
    </location>
</feature>
<feature type="topological domain" description="Extracellular" evidence="1">
    <location>
        <begin position="1"/>
        <end position="47"/>
    </location>
</feature>
<feature type="transmembrane region" description="Helical; Name=1" evidence="1">
    <location>
        <begin position="48"/>
        <end position="73"/>
    </location>
</feature>
<feature type="topological domain" description="Cytoplasmic" evidence="1">
    <location>
        <begin position="74"/>
        <end position="84"/>
    </location>
</feature>
<feature type="transmembrane region" description="Helical; Name=2" evidence="1">
    <location>
        <begin position="85"/>
        <end position="110"/>
    </location>
</feature>
<feature type="topological domain" description="Extracellular" evidence="1">
    <location>
        <begin position="111"/>
        <end position="120"/>
    </location>
</feature>
<feature type="transmembrane region" description="Helical; Name=3" evidence="1">
    <location>
        <begin position="121"/>
        <end position="143"/>
    </location>
</feature>
<feature type="topological domain" description="Cytoplasmic" evidence="1">
    <location>
        <begin position="144"/>
        <end position="163"/>
    </location>
</feature>
<feature type="transmembrane region" description="Helical; Name=4" evidence="1">
    <location>
        <begin position="164"/>
        <end position="187"/>
    </location>
</feature>
<feature type="topological domain" description="Extracellular" evidence="1">
    <location>
        <begin position="188"/>
        <end position="206"/>
    </location>
</feature>
<feature type="transmembrane region" description="Helical; Name=5" evidence="1">
    <location>
        <begin position="207"/>
        <end position="231"/>
    </location>
</feature>
<feature type="topological domain" description="Cytoplasmic" evidence="1">
    <location>
        <begin position="232"/>
        <end position="388"/>
    </location>
</feature>
<feature type="transmembrane region" description="Helical; Name=6" evidence="1">
    <location>
        <begin position="389"/>
        <end position="413"/>
    </location>
</feature>
<feature type="topological domain" description="Extracellular" evidence="1">
    <location>
        <begin position="414"/>
        <end position="423"/>
    </location>
</feature>
<feature type="transmembrane region" description="Helical; Name=7" evidence="1">
    <location>
        <begin position="424"/>
        <end position="444"/>
    </location>
</feature>
<feature type="topological domain" description="Cytoplasmic" evidence="1">
    <location>
        <begin position="445"/>
        <end position="464"/>
    </location>
</feature>
<feature type="region of interest" description="Disordered" evidence="7">
    <location>
        <begin position="13"/>
        <end position="34"/>
    </location>
</feature>
<feature type="region of interest" description="Disordered" evidence="7">
    <location>
        <begin position="240"/>
        <end position="378"/>
    </location>
</feature>
<feature type="compositionally biased region" description="Polar residues" evidence="7">
    <location>
        <begin position="19"/>
        <end position="29"/>
    </location>
</feature>
<feature type="compositionally biased region" description="Low complexity" evidence="7">
    <location>
        <begin position="251"/>
        <end position="268"/>
    </location>
</feature>
<feature type="compositionally biased region" description="Basic and acidic residues" evidence="7">
    <location>
        <begin position="312"/>
        <end position="329"/>
    </location>
</feature>
<feature type="compositionally biased region" description="Gly residues" evidence="7">
    <location>
        <begin position="354"/>
        <end position="363"/>
    </location>
</feature>
<feature type="site" description="Implicated in ligand binding" evidence="1">
    <location>
        <position position="127"/>
    </location>
</feature>
<feature type="site" description="Implicated in agonist binding and receptor activation" evidence="1">
    <location>
        <position position="213"/>
    </location>
</feature>
<feature type="site" description="Implicated in agonist binding and receptor activation" evidence="1">
    <location>
        <position position="217"/>
    </location>
</feature>
<feature type="modified residue" description="Phosphoserine" evidence="3">
    <location>
        <position position="345"/>
    </location>
</feature>
<feature type="modified residue" description="Omega-N-methylarginine" evidence="4">
    <location>
        <position position="367"/>
    </location>
</feature>
<feature type="lipid moiety-binding region" description="S-palmitoyl cysteine" evidence="1">
    <location>
        <position position="456"/>
    </location>
</feature>
<feature type="glycosylation site" description="N-linked (GlcNAc...) asparagine" evidence="5">
    <location>
        <position position="24"/>
    </location>
</feature>
<feature type="glycosylation site" description="N-linked (GlcNAc...) asparagine" evidence="5">
    <location>
        <position position="28"/>
    </location>
</feature>
<feature type="disulfide bond" evidence="6">
    <location>
        <begin position="120"/>
        <end position="201"/>
    </location>
</feature>
<accession>Q60474</accession>